<proteinExistence type="inferred from homology"/>
<feature type="chain" id="PRO_0000272432" description="Phosphate import ATP-binding protein PstB">
    <location>
        <begin position="1"/>
        <end position="282"/>
    </location>
</feature>
<feature type="domain" description="ABC transporter" evidence="1">
    <location>
        <begin position="36"/>
        <end position="277"/>
    </location>
</feature>
<feature type="region of interest" description="Disordered" evidence="2">
    <location>
        <begin position="1"/>
        <end position="33"/>
    </location>
</feature>
<feature type="binding site" evidence="1">
    <location>
        <begin position="68"/>
        <end position="75"/>
    </location>
    <ligand>
        <name>ATP</name>
        <dbReference type="ChEBI" id="CHEBI:30616"/>
    </ligand>
</feature>
<name>PSTB_PARXL</name>
<accession>Q13W55</accession>
<sequence length="282" mass="31540">MNMAETQLNPIARPTAPAGFDPAQSGQSQAPSRPKIEINDLNFFYGKYHALKNINLQIPEGKVTAFIGPSGCGKSTLLRTLNKMYALYPEQRAEGEILMDGENLLTTKRDISLLRARIGMVFQKPTPFPMSIYDNIAFGVKMFETLPRSEMDDRVEWALTKAALWNEVKDKLGQSGYGLSGGQQQRLCIARGIAIRPEVLLLDEPCSALDPISTGRIEELIAELKSDYTVVIVTHNMQQAARCSDYTAYMYLGELIEFGDTEKIFIKPVRKETEDYITGRFG</sequence>
<keyword id="KW-0067">ATP-binding</keyword>
<keyword id="KW-0997">Cell inner membrane</keyword>
<keyword id="KW-1003">Cell membrane</keyword>
<keyword id="KW-0472">Membrane</keyword>
<keyword id="KW-0547">Nucleotide-binding</keyword>
<keyword id="KW-0592">Phosphate transport</keyword>
<keyword id="KW-1185">Reference proteome</keyword>
<keyword id="KW-1278">Translocase</keyword>
<keyword id="KW-0813">Transport</keyword>
<dbReference type="EC" id="7.3.2.1" evidence="1"/>
<dbReference type="EMBL" id="CP000270">
    <property type="protein sequence ID" value="ABE31684.1"/>
    <property type="molecule type" value="Genomic_DNA"/>
</dbReference>
<dbReference type="RefSeq" id="WP_007181025.1">
    <property type="nucleotide sequence ID" value="NZ_CP008760.1"/>
</dbReference>
<dbReference type="SMR" id="Q13W55"/>
<dbReference type="STRING" id="266265.Bxe_A1269"/>
<dbReference type="KEGG" id="bxb:DR64_3427"/>
<dbReference type="KEGG" id="bxe:Bxe_A1269"/>
<dbReference type="eggNOG" id="COG1117">
    <property type="taxonomic scope" value="Bacteria"/>
</dbReference>
<dbReference type="OrthoDB" id="9802264at2"/>
<dbReference type="Proteomes" id="UP000001817">
    <property type="component" value="Chromosome 1"/>
</dbReference>
<dbReference type="GO" id="GO:0005886">
    <property type="term" value="C:plasma membrane"/>
    <property type="evidence" value="ECO:0007669"/>
    <property type="project" value="UniProtKB-SubCell"/>
</dbReference>
<dbReference type="GO" id="GO:0005524">
    <property type="term" value="F:ATP binding"/>
    <property type="evidence" value="ECO:0007669"/>
    <property type="project" value="UniProtKB-KW"/>
</dbReference>
<dbReference type="GO" id="GO:0016887">
    <property type="term" value="F:ATP hydrolysis activity"/>
    <property type="evidence" value="ECO:0007669"/>
    <property type="project" value="InterPro"/>
</dbReference>
<dbReference type="GO" id="GO:0015415">
    <property type="term" value="F:ATPase-coupled phosphate ion transmembrane transporter activity"/>
    <property type="evidence" value="ECO:0007669"/>
    <property type="project" value="UniProtKB-EC"/>
</dbReference>
<dbReference type="GO" id="GO:0035435">
    <property type="term" value="P:phosphate ion transmembrane transport"/>
    <property type="evidence" value="ECO:0007669"/>
    <property type="project" value="InterPro"/>
</dbReference>
<dbReference type="CDD" id="cd03260">
    <property type="entry name" value="ABC_PstB_phosphate_transporter"/>
    <property type="match status" value="1"/>
</dbReference>
<dbReference type="FunFam" id="3.40.50.300:FF:000132">
    <property type="entry name" value="Phosphate import ATP-binding protein PstB"/>
    <property type="match status" value="1"/>
</dbReference>
<dbReference type="Gene3D" id="3.40.50.300">
    <property type="entry name" value="P-loop containing nucleotide triphosphate hydrolases"/>
    <property type="match status" value="1"/>
</dbReference>
<dbReference type="InterPro" id="IPR003593">
    <property type="entry name" value="AAA+_ATPase"/>
</dbReference>
<dbReference type="InterPro" id="IPR003439">
    <property type="entry name" value="ABC_transporter-like_ATP-bd"/>
</dbReference>
<dbReference type="InterPro" id="IPR017871">
    <property type="entry name" value="ABC_transporter-like_CS"/>
</dbReference>
<dbReference type="InterPro" id="IPR027417">
    <property type="entry name" value="P-loop_NTPase"/>
</dbReference>
<dbReference type="InterPro" id="IPR005670">
    <property type="entry name" value="PstB-like"/>
</dbReference>
<dbReference type="NCBIfam" id="TIGR00972">
    <property type="entry name" value="3a0107s01c2"/>
    <property type="match status" value="1"/>
</dbReference>
<dbReference type="PANTHER" id="PTHR43423">
    <property type="entry name" value="ABC TRANSPORTER I FAMILY MEMBER 17"/>
    <property type="match status" value="1"/>
</dbReference>
<dbReference type="PANTHER" id="PTHR43423:SF3">
    <property type="entry name" value="PHOSPHATE IMPORT ATP-BINDING PROTEIN PSTB"/>
    <property type="match status" value="1"/>
</dbReference>
<dbReference type="Pfam" id="PF00005">
    <property type="entry name" value="ABC_tran"/>
    <property type="match status" value="1"/>
</dbReference>
<dbReference type="SMART" id="SM00382">
    <property type="entry name" value="AAA"/>
    <property type="match status" value="1"/>
</dbReference>
<dbReference type="SUPFAM" id="SSF52540">
    <property type="entry name" value="P-loop containing nucleoside triphosphate hydrolases"/>
    <property type="match status" value="1"/>
</dbReference>
<dbReference type="PROSITE" id="PS00211">
    <property type="entry name" value="ABC_TRANSPORTER_1"/>
    <property type="match status" value="1"/>
</dbReference>
<dbReference type="PROSITE" id="PS50893">
    <property type="entry name" value="ABC_TRANSPORTER_2"/>
    <property type="match status" value="1"/>
</dbReference>
<dbReference type="PROSITE" id="PS51238">
    <property type="entry name" value="PSTB"/>
    <property type="match status" value="1"/>
</dbReference>
<protein>
    <recommendedName>
        <fullName evidence="1">Phosphate import ATP-binding protein PstB</fullName>
        <ecNumber evidence="1">7.3.2.1</ecNumber>
    </recommendedName>
    <alternativeName>
        <fullName evidence="1">ABC phosphate transporter</fullName>
    </alternativeName>
    <alternativeName>
        <fullName evidence="1">Phosphate-transporting ATPase</fullName>
    </alternativeName>
</protein>
<evidence type="ECO:0000255" key="1">
    <source>
        <dbReference type="HAMAP-Rule" id="MF_01702"/>
    </source>
</evidence>
<evidence type="ECO:0000256" key="2">
    <source>
        <dbReference type="SAM" id="MobiDB-lite"/>
    </source>
</evidence>
<gene>
    <name evidence="1" type="primary">pstB</name>
    <name type="ordered locus">Bxeno_A3146</name>
    <name type="ORF">Bxe_A1269</name>
</gene>
<comment type="function">
    <text evidence="1">Part of the ABC transporter complex PstSACB involved in phosphate import. Responsible for energy coupling to the transport system.</text>
</comment>
<comment type="catalytic activity">
    <reaction evidence="1">
        <text>phosphate(out) + ATP + H2O = ADP + 2 phosphate(in) + H(+)</text>
        <dbReference type="Rhea" id="RHEA:24440"/>
        <dbReference type="ChEBI" id="CHEBI:15377"/>
        <dbReference type="ChEBI" id="CHEBI:15378"/>
        <dbReference type="ChEBI" id="CHEBI:30616"/>
        <dbReference type="ChEBI" id="CHEBI:43474"/>
        <dbReference type="ChEBI" id="CHEBI:456216"/>
        <dbReference type="EC" id="7.3.2.1"/>
    </reaction>
</comment>
<comment type="subunit">
    <text evidence="1">The complex is composed of two ATP-binding proteins (PstB), two transmembrane proteins (PstC and PstA) and a solute-binding protein (PstS).</text>
</comment>
<comment type="subcellular location">
    <subcellularLocation>
        <location evidence="1">Cell inner membrane</location>
        <topology evidence="1">Peripheral membrane protein</topology>
    </subcellularLocation>
</comment>
<comment type="similarity">
    <text evidence="1">Belongs to the ABC transporter superfamily. Phosphate importer (TC 3.A.1.7) family.</text>
</comment>
<reference key="1">
    <citation type="journal article" date="2006" name="Proc. Natl. Acad. Sci. U.S.A.">
        <title>Burkholderia xenovorans LB400 harbors a multi-replicon, 9.73-Mbp genome shaped for versatility.</title>
        <authorList>
            <person name="Chain P.S.G."/>
            <person name="Denef V.J."/>
            <person name="Konstantinidis K.T."/>
            <person name="Vergez L.M."/>
            <person name="Agullo L."/>
            <person name="Reyes V.L."/>
            <person name="Hauser L."/>
            <person name="Cordova M."/>
            <person name="Gomez L."/>
            <person name="Gonzalez M."/>
            <person name="Land M."/>
            <person name="Lao V."/>
            <person name="Larimer F."/>
            <person name="LiPuma J.J."/>
            <person name="Mahenthiralingam E."/>
            <person name="Malfatti S.A."/>
            <person name="Marx C.J."/>
            <person name="Parnell J.J."/>
            <person name="Ramette A."/>
            <person name="Richardson P."/>
            <person name="Seeger M."/>
            <person name="Smith D."/>
            <person name="Spilker T."/>
            <person name="Sul W.J."/>
            <person name="Tsoi T.V."/>
            <person name="Ulrich L.E."/>
            <person name="Zhulin I.B."/>
            <person name="Tiedje J.M."/>
        </authorList>
    </citation>
    <scope>NUCLEOTIDE SEQUENCE [LARGE SCALE GENOMIC DNA]</scope>
    <source>
        <strain>LB400</strain>
    </source>
</reference>
<organism>
    <name type="scientific">Paraburkholderia xenovorans (strain LB400)</name>
    <dbReference type="NCBI Taxonomy" id="266265"/>
    <lineage>
        <taxon>Bacteria</taxon>
        <taxon>Pseudomonadati</taxon>
        <taxon>Pseudomonadota</taxon>
        <taxon>Betaproteobacteria</taxon>
        <taxon>Burkholderiales</taxon>
        <taxon>Burkholderiaceae</taxon>
        <taxon>Paraburkholderia</taxon>
    </lineage>
</organism>